<accession>Q88WJ7</accession>
<accession>F9UP06</accession>
<reference key="1">
    <citation type="journal article" date="2003" name="Proc. Natl. Acad. Sci. U.S.A.">
        <title>Complete genome sequence of Lactobacillus plantarum WCFS1.</title>
        <authorList>
            <person name="Kleerebezem M."/>
            <person name="Boekhorst J."/>
            <person name="van Kranenburg R."/>
            <person name="Molenaar D."/>
            <person name="Kuipers O.P."/>
            <person name="Leer R."/>
            <person name="Tarchini R."/>
            <person name="Peters S.A."/>
            <person name="Sandbrink H.M."/>
            <person name="Fiers M.W.E.J."/>
            <person name="Stiekema W."/>
            <person name="Klein Lankhorst R.M."/>
            <person name="Bron P.A."/>
            <person name="Hoffer S.M."/>
            <person name="Nierop Groot M.N."/>
            <person name="Kerkhoven R."/>
            <person name="De Vries M."/>
            <person name="Ursing B."/>
            <person name="De Vos W.M."/>
            <person name="Siezen R.J."/>
        </authorList>
    </citation>
    <scope>NUCLEOTIDE SEQUENCE [LARGE SCALE GENOMIC DNA]</scope>
    <source>
        <strain>ATCC BAA-793 / NCIMB 8826 / WCFS1</strain>
    </source>
</reference>
<reference key="2">
    <citation type="journal article" date="2012" name="J. Bacteriol.">
        <title>Complete resequencing and reannotation of the Lactobacillus plantarum WCFS1 genome.</title>
        <authorList>
            <person name="Siezen R.J."/>
            <person name="Francke C."/>
            <person name="Renckens B."/>
            <person name="Boekhorst J."/>
            <person name="Wels M."/>
            <person name="Kleerebezem M."/>
            <person name="van Hijum S.A."/>
        </authorList>
    </citation>
    <scope>NUCLEOTIDE SEQUENCE [LARGE SCALE GENOMIC DNA]</scope>
    <scope>GENOME REANNOTATION</scope>
    <source>
        <strain>ATCC BAA-793 / NCIMB 8826 / WCFS1</strain>
    </source>
</reference>
<gene>
    <name type="ordered locus">lp_1634</name>
</gene>
<organism>
    <name type="scientific">Lactiplantibacillus plantarum (strain ATCC BAA-793 / NCIMB 8826 / WCFS1)</name>
    <name type="common">Lactobacillus plantarum</name>
    <dbReference type="NCBI Taxonomy" id="220668"/>
    <lineage>
        <taxon>Bacteria</taxon>
        <taxon>Bacillati</taxon>
        <taxon>Bacillota</taxon>
        <taxon>Bacilli</taxon>
        <taxon>Lactobacillales</taxon>
        <taxon>Lactobacillaceae</taxon>
        <taxon>Lactiplantibacillus</taxon>
    </lineage>
</organism>
<evidence type="ECO:0000255" key="1">
    <source>
        <dbReference type="HAMAP-Rule" id="MF_00245"/>
    </source>
</evidence>
<comment type="function">
    <text evidence="1">Might take part in the signal recognition particle (SRP) pathway. This is inferred from the conservation of its genetic proximity to ftsY/ffh. May be a regulatory protein.</text>
</comment>
<comment type="similarity">
    <text evidence="1">Belongs to the UPF0122 family.</text>
</comment>
<name>Y1634_LACPL</name>
<sequence>MEIEKNYRINSLFEFYEPLLTNKQKAYIQLYYADDYSLGEIAAEFSVSRQAVYDNIKRTEKILEGYEAKLHLYHDFVERNHEVDAISDYIKQNYHGDTQLIKMIQQLVNLEADSE</sequence>
<keyword id="KW-1185">Reference proteome</keyword>
<proteinExistence type="inferred from homology"/>
<protein>
    <recommendedName>
        <fullName evidence="1">UPF0122 protein lp_1634</fullName>
    </recommendedName>
</protein>
<feature type="chain" id="PRO_0000211868" description="UPF0122 protein lp_1634">
    <location>
        <begin position="1"/>
        <end position="115"/>
    </location>
</feature>
<dbReference type="EMBL" id="AL935263">
    <property type="protein sequence ID" value="CCC78945.1"/>
    <property type="molecule type" value="Genomic_DNA"/>
</dbReference>
<dbReference type="RefSeq" id="WP_003640380.1">
    <property type="nucleotide sequence ID" value="NC_004567.2"/>
</dbReference>
<dbReference type="RefSeq" id="YP_004889459.1">
    <property type="nucleotide sequence ID" value="NC_004567.2"/>
</dbReference>
<dbReference type="SMR" id="Q88WJ7"/>
<dbReference type="STRING" id="220668.lp_1634"/>
<dbReference type="EnsemblBacteria" id="CCC78945">
    <property type="protein sequence ID" value="CCC78945"/>
    <property type="gene ID" value="lp_1634"/>
</dbReference>
<dbReference type="KEGG" id="lpl:lp_1634"/>
<dbReference type="PATRIC" id="fig|220668.9.peg.1381"/>
<dbReference type="eggNOG" id="COG2739">
    <property type="taxonomic scope" value="Bacteria"/>
</dbReference>
<dbReference type="HOGENOM" id="CLU_129218_1_0_9"/>
<dbReference type="OrthoDB" id="6392at2"/>
<dbReference type="PhylomeDB" id="Q88WJ7"/>
<dbReference type="Proteomes" id="UP000000432">
    <property type="component" value="Chromosome"/>
</dbReference>
<dbReference type="Gene3D" id="1.10.10.10">
    <property type="entry name" value="Winged helix-like DNA-binding domain superfamily/Winged helix DNA-binding domain"/>
    <property type="match status" value="1"/>
</dbReference>
<dbReference type="HAMAP" id="MF_00245">
    <property type="entry name" value="UPF0122"/>
    <property type="match status" value="1"/>
</dbReference>
<dbReference type="InterPro" id="IPR013324">
    <property type="entry name" value="RNA_pol_sigma_r3/r4-like"/>
</dbReference>
<dbReference type="InterPro" id="IPR007394">
    <property type="entry name" value="UPF0122"/>
</dbReference>
<dbReference type="InterPro" id="IPR054831">
    <property type="entry name" value="UPF0122_fam_protein"/>
</dbReference>
<dbReference type="InterPro" id="IPR036388">
    <property type="entry name" value="WH-like_DNA-bd_sf"/>
</dbReference>
<dbReference type="NCBIfam" id="NF001068">
    <property type="entry name" value="PRK00118.1-4"/>
    <property type="match status" value="1"/>
</dbReference>
<dbReference type="NCBIfam" id="NF001070">
    <property type="entry name" value="PRK00118.1-6"/>
    <property type="match status" value="1"/>
</dbReference>
<dbReference type="NCBIfam" id="NF045758">
    <property type="entry name" value="YlxM"/>
    <property type="match status" value="1"/>
</dbReference>
<dbReference type="PANTHER" id="PTHR40083">
    <property type="entry name" value="UPF0122 PROTEIN CBO2450/CLC_2298"/>
    <property type="match status" value="1"/>
</dbReference>
<dbReference type="PANTHER" id="PTHR40083:SF1">
    <property type="entry name" value="UPF0122 PROTEIN YLXM"/>
    <property type="match status" value="1"/>
</dbReference>
<dbReference type="Pfam" id="PF04297">
    <property type="entry name" value="UPF0122"/>
    <property type="match status" value="1"/>
</dbReference>
<dbReference type="SUPFAM" id="SSF88659">
    <property type="entry name" value="Sigma3 and sigma4 domains of RNA polymerase sigma factors"/>
    <property type="match status" value="1"/>
</dbReference>